<reference key="1">
    <citation type="submission" date="2007-07" db="EMBL/GenBank/DDBJ databases">
        <title>Complete sequence of Fervidobacterium nodosum Rt17-B1.</title>
        <authorList>
            <consortium name="US DOE Joint Genome Institute"/>
            <person name="Copeland A."/>
            <person name="Lucas S."/>
            <person name="Lapidus A."/>
            <person name="Barry K."/>
            <person name="Glavina del Rio T."/>
            <person name="Dalin E."/>
            <person name="Tice H."/>
            <person name="Pitluck S."/>
            <person name="Saunders E."/>
            <person name="Brettin T."/>
            <person name="Bruce D."/>
            <person name="Detter J.C."/>
            <person name="Han C."/>
            <person name="Schmutz J."/>
            <person name="Larimer F."/>
            <person name="Land M."/>
            <person name="Hauser L."/>
            <person name="Kyrpides N."/>
            <person name="Mikhailova N."/>
            <person name="Nelson K."/>
            <person name="Gogarten J.P."/>
            <person name="Noll K."/>
            <person name="Richardson P."/>
        </authorList>
    </citation>
    <scope>NUCLEOTIDE SEQUENCE [LARGE SCALE GENOMIC DNA]</scope>
    <source>
        <strain>ATCC 35602 / DSM 5306 / Rt17-B1</strain>
    </source>
</reference>
<proteinExistence type="inferred from homology"/>
<feature type="chain" id="PRO_1000071238" description="S-adenosylmethionine synthase">
    <location>
        <begin position="1"/>
        <end position="396"/>
    </location>
</feature>
<feature type="region of interest" description="Flexible loop" evidence="1">
    <location>
        <begin position="98"/>
        <end position="108"/>
    </location>
</feature>
<feature type="binding site" description="in other chain" evidence="1">
    <location>
        <position position="14"/>
    </location>
    <ligand>
        <name>ATP</name>
        <dbReference type="ChEBI" id="CHEBI:30616"/>
        <note>ligand shared between two neighboring subunits</note>
    </ligand>
</feature>
<feature type="binding site" evidence="1">
    <location>
        <position position="16"/>
    </location>
    <ligand>
        <name>Mg(2+)</name>
        <dbReference type="ChEBI" id="CHEBI:18420"/>
    </ligand>
</feature>
<feature type="binding site" evidence="1">
    <location>
        <position position="42"/>
    </location>
    <ligand>
        <name>K(+)</name>
        <dbReference type="ChEBI" id="CHEBI:29103"/>
    </ligand>
</feature>
<feature type="binding site" description="in other chain" evidence="1">
    <location>
        <position position="55"/>
    </location>
    <ligand>
        <name>L-methionine</name>
        <dbReference type="ChEBI" id="CHEBI:57844"/>
        <note>ligand shared between two neighboring subunits</note>
    </ligand>
</feature>
<feature type="binding site" description="in other chain" evidence="1">
    <location>
        <position position="98"/>
    </location>
    <ligand>
        <name>L-methionine</name>
        <dbReference type="ChEBI" id="CHEBI:57844"/>
        <note>ligand shared between two neighboring subunits</note>
    </ligand>
</feature>
<feature type="binding site" description="in other chain" evidence="1">
    <location>
        <begin position="174"/>
        <end position="176"/>
    </location>
    <ligand>
        <name>ATP</name>
        <dbReference type="ChEBI" id="CHEBI:30616"/>
        <note>ligand shared between two neighboring subunits</note>
    </ligand>
</feature>
<feature type="binding site" description="in other chain" evidence="1">
    <location>
        <begin position="241"/>
        <end position="242"/>
    </location>
    <ligand>
        <name>ATP</name>
        <dbReference type="ChEBI" id="CHEBI:30616"/>
        <note>ligand shared between two neighboring subunits</note>
    </ligand>
</feature>
<feature type="binding site" evidence="1">
    <location>
        <position position="250"/>
    </location>
    <ligand>
        <name>ATP</name>
        <dbReference type="ChEBI" id="CHEBI:30616"/>
        <note>ligand shared between two neighboring subunits</note>
    </ligand>
</feature>
<feature type="binding site" evidence="1">
    <location>
        <position position="250"/>
    </location>
    <ligand>
        <name>L-methionine</name>
        <dbReference type="ChEBI" id="CHEBI:57844"/>
        <note>ligand shared between two neighboring subunits</note>
    </ligand>
</feature>
<feature type="binding site" description="in other chain" evidence="1">
    <location>
        <begin position="256"/>
        <end position="257"/>
    </location>
    <ligand>
        <name>ATP</name>
        <dbReference type="ChEBI" id="CHEBI:30616"/>
        <note>ligand shared between two neighboring subunits</note>
    </ligand>
</feature>
<feature type="binding site" evidence="1">
    <location>
        <position position="273"/>
    </location>
    <ligand>
        <name>ATP</name>
        <dbReference type="ChEBI" id="CHEBI:30616"/>
        <note>ligand shared between two neighboring subunits</note>
    </ligand>
</feature>
<feature type="binding site" evidence="1">
    <location>
        <position position="277"/>
    </location>
    <ligand>
        <name>ATP</name>
        <dbReference type="ChEBI" id="CHEBI:30616"/>
        <note>ligand shared between two neighboring subunits</note>
    </ligand>
</feature>
<feature type="binding site" description="in other chain" evidence="1">
    <location>
        <position position="281"/>
    </location>
    <ligand>
        <name>L-methionine</name>
        <dbReference type="ChEBI" id="CHEBI:57844"/>
        <note>ligand shared between two neighboring subunits</note>
    </ligand>
</feature>
<comment type="function">
    <text evidence="1">Catalyzes the formation of S-adenosylmethionine (AdoMet) from methionine and ATP. The overall synthetic reaction is composed of two sequential steps, AdoMet formation and the subsequent tripolyphosphate hydrolysis which occurs prior to release of AdoMet from the enzyme.</text>
</comment>
<comment type="catalytic activity">
    <reaction evidence="1">
        <text>L-methionine + ATP + H2O = S-adenosyl-L-methionine + phosphate + diphosphate</text>
        <dbReference type="Rhea" id="RHEA:21080"/>
        <dbReference type="ChEBI" id="CHEBI:15377"/>
        <dbReference type="ChEBI" id="CHEBI:30616"/>
        <dbReference type="ChEBI" id="CHEBI:33019"/>
        <dbReference type="ChEBI" id="CHEBI:43474"/>
        <dbReference type="ChEBI" id="CHEBI:57844"/>
        <dbReference type="ChEBI" id="CHEBI:59789"/>
        <dbReference type="EC" id="2.5.1.6"/>
    </reaction>
</comment>
<comment type="cofactor">
    <cofactor evidence="1">
        <name>Mg(2+)</name>
        <dbReference type="ChEBI" id="CHEBI:18420"/>
    </cofactor>
    <text evidence="1">Binds 2 divalent ions per subunit.</text>
</comment>
<comment type="cofactor">
    <cofactor evidence="1">
        <name>K(+)</name>
        <dbReference type="ChEBI" id="CHEBI:29103"/>
    </cofactor>
    <text evidence="1">Binds 1 potassium ion per subunit.</text>
</comment>
<comment type="pathway">
    <text evidence="1">Amino-acid biosynthesis; S-adenosyl-L-methionine biosynthesis; S-adenosyl-L-methionine from L-methionine: step 1/1.</text>
</comment>
<comment type="subunit">
    <text evidence="1">Homotetramer; dimer of dimers.</text>
</comment>
<comment type="subcellular location">
    <subcellularLocation>
        <location evidence="1">Cytoplasm</location>
    </subcellularLocation>
</comment>
<comment type="similarity">
    <text evidence="1">Belongs to the AdoMet synthase family.</text>
</comment>
<organism>
    <name type="scientific">Fervidobacterium nodosum (strain ATCC 35602 / DSM 5306 / Rt17-B1)</name>
    <dbReference type="NCBI Taxonomy" id="381764"/>
    <lineage>
        <taxon>Bacteria</taxon>
        <taxon>Thermotogati</taxon>
        <taxon>Thermotogota</taxon>
        <taxon>Thermotogae</taxon>
        <taxon>Thermotogales</taxon>
        <taxon>Fervidobacteriaceae</taxon>
        <taxon>Fervidobacterium</taxon>
    </lineage>
</organism>
<gene>
    <name evidence="1" type="primary">metK</name>
    <name type="ordered locus">Fnod_0125</name>
</gene>
<dbReference type="EC" id="2.5.1.6" evidence="1"/>
<dbReference type="EMBL" id="CP000771">
    <property type="protein sequence ID" value="ABS59992.1"/>
    <property type="molecule type" value="Genomic_DNA"/>
</dbReference>
<dbReference type="RefSeq" id="WP_011993315.1">
    <property type="nucleotide sequence ID" value="NC_009718.1"/>
</dbReference>
<dbReference type="SMR" id="A7HJA9"/>
<dbReference type="STRING" id="381764.Fnod_0125"/>
<dbReference type="KEGG" id="fno:Fnod_0125"/>
<dbReference type="eggNOG" id="COG0192">
    <property type="taxonomic scope" value="Bacteria"/>
</dbReference>
<dbReference type="HOGENOM" id="CLU_041802_1_1_0"/>
<dbReference type="OrthoDB" id="9801686at2"/>
<dbReference type="UniPathway" id="UPA00315">
    <property type="reaction ID" value="UER00080"/>
</dbReference>
<dbReference type="Proteomes" id="UP000002415">
    <property type="component" value="Chromosome"/>
</dbReference>
<dbReference type="GO" id="GO:0005737">
    <property type="term" value="C:cytoplasm"/>
    <property type="evidence" value="ECO:0007669"/>
    <property type="project" value="UniProtKB-SubCell"/>
</dbReference>
<dbReference type="GO" id="GO:0005524">
    <property type="term" value="F:ATP binding"/>
    <property type="evidence" value="ECO:0007669"/>
    <property type="project" value="UniProtKB-UniRule"/>
</dbReference>
<dbReference type="GO" id="GO:0000287">
    <property type="term" value="F:magnesium ion binding"/>
    <property type="evidence" value="ECO:0007669"/>
    <property type="project" value="UniProtKB-UniRule"/>
</dbReference>
<dbReference type="GO" id="GO:0004478">
    <property type="term" value="F:methionine adenosyltransferase activity"/>
    <property type="evidence" value="ECO:0007669"/>
    <property type="project" value="UniProtKB-UniRule"/>
</dbReference>
<dbReference type="GO" id="GO:0006730">
    <property type="term" value="P:one-carbon metabolic process"/>
    <property type="evidence" value="ECO:0007669"/>
    <property type="project" value="UniProtKB-KW"/>
</dbReference>
<dbReference type="GO" id="GO:0006556">
    <property type="term" value="P:S-adenosylmethionine biosynthetic process"/>
    <property type="evidence" value="ECO:0007669"/>
    <property type="project" value="UniProtKB-UniRule"/>
</dbReference>
<dbReference type="CDD" id="cd18079">
    <property type="entry name" value="S-AdoMet_synt"/>
    <property type="match status" value="1"/>
</dbReference>
<dbReference type="FunFam" id="3.30.300.10:FF:000003">
    <property type="entry name" value="S-adenosylmethionine synthase"/>
    <property type="match status" value="1"/>
</dbReference>
<dbReference type="FunFam" id="3.30.300.10:FF:000004">
    <property type="entry name" value="S-adenosylmethionine synthase"/>
    <property type="match status" value="1"/>
</dbReference>
<dbReference type="Gene3D" id="3.30.300.10">
    <property type="match status" value="3"/>
</dbReference>
<dbReference type="HAMAP" id="MF_00086">
    <property type="entry name" value="S_AdoMet_synth1"/>
    <property type="match status" value="1"/>
</dbReference>
<dbReference type="InterPro" id="IPR022631">
    <property type="entry name" value="ADOMET_SYNTHASE_CS"/>
</dbReference>
<dbReference type="InterPro" id="IPR022630">
    <property type="entry name" value="S-AdoMet_synt_C"/>
</dbReference>
<dbReference type="InterPro" id="IPR022629">
    <property type="entry name" value="S-AdoMet_synt_central"/>
</dbReference>
<dbReference type="InterPro" id="IPR022628">
    <property type="entry name" value="S-AdoMet_synt_N"/>
</dbReference>
<dbReference type="InterPro" id="IPR002133">
    <property type="entry name" value="S-AdoMet_synthetase"/>
</dbReference>
<dbReference type="InterPro" id="IPR022636">
    <property type="entry name" value="S-AdoMet_synthetase_sfam"/>
</dbReference>
<dbReference type="NCBIfam" id="TIGR01034">
    <property type="entry name" value="metK"/>
    <property type="match status" value="1"/>
</dbReference>
<dbReference type="PANTHER" id="PTHR11964">
    <property type="entry name" value="S-ADENOSYLMETHIONINE SYNTHETASE"/>
    <property type="match status" value="1"/>
</dbReference>
<dbReference type="Pfam" id="PF02773">
    <property type="entry name" value="S-AdoMet_synt_C"/>
    <property type="match status" value="1"/>
</dbReference>
<dbReference type="Pfam" id="PF02772">
    <property type="entry name" value="S-AdoMet_synt_M"/>
    <property type="match status" value="1"/>
</dbReference>
<dbReference type="Pfam" id="PF00438">
    <property type="entry name" value="S-AdoMet_synt_N"/>
    <property type="match status" value="1"/>
</dbReference>
<dbReference type="PIRSF" id="PIRSF000497">
    <property type="entry name" value="MAT"/>
    <property type="match status" value="1"/>
</dbReference>
<dbReference type="SUPFAM" id="SSF55973">
    <property type="entry name" value="S-adenosylmethionine synthetase"/>
    <property type="match status" value="3"/>
</dbReference>
<dbReference type="PROSITE" id="PS00376">
    <property type="entry name" value="ADOMET_SYNTHASE_1"/>
    <property type="match status" value="1"/>
</dbReference>
<dbReference type="PROSITE" id="PS00377">
    <property type="entry name" value="ADOMET_SYNTHASE_2"/>
    <property type="match status" value="1"/>
</dbReference>
<evidence type="ECO:0000255" key="1">
    <source>
        <dbReference type="HAMAP-Rule" id="MF_00086"/>
    </source>
</evidence>
<accession>A7HJA9</accession>
<keyword id="KW-0067">ATP-binding</keyword>
<keyword id="KW-0963">Cytoplasm</keyword>
<keyword id="KW-0460">Magnesium</keyword>
<keyword id="KW-0479">Metal-binding</keyword>
<keyword id="KW-0547">Nucleotide-binding</keyword>
<keyword id="KW-0554">One-carbon metabolism</keyword>
<keyword id="KW-0630">Potassium</keyword>
<keyword id="KW-1185">Reference proteome</keyword>
<keyword id="KW-0808">Transferase</keyword>
<sequence length="396" mass="43557">MRRLFTSESVTEGHPDKMADQISDAILDAIIEQDPKARVAVETLLTTGVAIVAGEVTTKAYVDVQDIVRKTVLDIGYTRAKYGFDGETCAVLSSIHSQSPDIALGVNEAAEFKQGDKAEDEIEKVGAGDQGMMFGYATNETEELMPLPIMLAHKLAMKLAEVRKNGTVPFLRPDGKTQVTIEYDENEKPVRVDTVLISTQHEPDVTIPEIREALVKYVINPIIPENLRDDNMKILVNPTGRFVLGGPSADTGLTGRKIIVDTYGGAIPHGGGAFSGKDPTKVDRSAHYFARYVAKNVVAAGLADKFMIQVAYAIGVARPVSIMINTFGTAKVDEEKLRKVVEEIFDFRPGAIIKKLDLLRPIYRKTAAYGHFGRNDPDFTWERTDMVRELKAAFNL</sequence>
<name>METK_FERNB</name>
<protein>
    <recommendedName>
        <fullName evidence="1">S-adenosylmethionine synthase</fullName>
        <shortName evidence="1">AdoMet synthase</shortName>
        <ecNumber evidence="1">2.5.1.6</ecNumber>
    </recommendedName>
    <alternativeName>
        <fullName evidence="1">MAT</fullName>
    </alternativeName>
    <alternativeName>
        <fullName evidence="1">Methionine adenosyltransferase</fullName>
    </alternativeName>
</protein>